<comment type="function">
    <text evidence="3">Component of the cytochrome c oxidase, the last enzyme in the mitochondrial electron transport chain which drives oxidative phosphorylation. The respiratory chain contains 3 multisubunit complexes succinate dehydrogenase (complex II, CII), ubiquinol-cytochrome c oxidoreductase (cytochrome b-c1 complex, complex III, CIII) and cytochrome c oxidase (complex IV, CIV), that cooperate to transfer electrons derived from NADH and succinate to molecular oxygen, creating an electrochemical gradient over the inner membrane that drives transmembrane transport and the ATP synthase. Cytochrome c oxidase is the component of the respiratory chain that catalyzes the reduction of oxygen to water. Electrons originating from reduced cytochrome c in the intermembrane space (IMS) are transferred via the dinuclear copper A center (CU(A)) of subunit 2 and heme A of subunit 1 to the active site in subunit 1, a binuclear center (BNC) formed by heme A3 and copper B (CU(B)). The BNC reduces molecular oxygen to 2 water molecules using 4 electrons from cytochrome c in the IMS and 4 protons from the mitochondrial matrix.</text>
</comment>
<comment type="catalytic activity">
    <reaction evidence="3">
        <text>4 Fe(II)-[cytochrome c] + O2 + 8 H(+)(in) = 4 Fe(III)-[cytochrome c] + 2 H2O + 4 H(+)(out)</text>
        <dbReference type="Rhea" id="RHEA:11436"/>
        <dbReference type="Rhea" id="RHEA-COMP:10350"/>
        <dbReference type="Rhea" id="RHEA-COMP:14399"/>
        <dbReference type="ChEBI" id="CHEBI:15377"/>
        <dbReference type="ChEBI" id="CHEBI:15378"/>
        <dbReference type="ChEBI" id="CHEBI:15379"/>
        <dbReference type="ChEBI" id="CHEBI:29033"/>
        <dbReference type="ChEBI" id="CHEBI:29034"/>
        <dbReference type="EC" id="7.1.1.9"/>
    </reaction>
    <physiologicalReaction direction="left-to-right" evidence="3">
        <dbReference type="Rhea" id="RHEA:11437"/>
    </physiologicalReaction>
</comment>
<comment type="cofactor">
    <cofactor evidence="4">
        <name>Cu cation</name>
        <dbReference type="ChEBI" id="CHEBI:23378"/>
    </cofactor>
    <text evidence="4">Binds a dinuclear copper A center per subunit.</text>
</comment>
<comment type="subunit">
    <text evidence="1 4">Component of the cytochrome c oxidase (complex IV, CIV), a multisubunit enzyme composed of 14 subunits. The complex is composed of a catalytic core of 3 subunits MT-CO1, MT-CO2 and MT-CO3, encoded in the mitochondrial DNA, and 11 supernumerary subunits COX4I, COX5A, COX5B, COX6A, COX6B, COX6C, COX7A, COX7B, COX7C, COX8 and NDUFA4, which are encoded in the nuclear genome. The complex exists as a monomer or a dimer and forms supercomplexes (SCs) in the inner mitochondrial membrane with NADH-ubiquinone oxidoreductase (complex I, CI) and ubiquinol-cytochrome c oxidoreductase (cytochrome b-c1 complex, complex III, CIII), resulting in different assemblies (supercomplex SCI(1)III(2)IV(1) and megacomplex MCI(2)III(2)IV(2)) (By similarity). Found in a complex with TMEM177, COA6, COX18, COX20, SCO1 and SCO2. Interacts with TMEM177 in a COX20-dependent manner. Interacts with COX20. Interacts with COX16 (By similarity).</text>
</comment>
<comment type="subcellular location">
    <subcellularLocation>
        <location evidence="4">Mitochondrion inner membrane</location>
        <topology evidence="4">Multi-pass membrane protein</topology>
    </subcellularLocation>
</comment>
<comment type="similarity">
    <text evidence="5">Belongs to the cytochrome c oxidase subunit 2 family.</text>
</comment>
<dbReference type="EC" id="7.1.1.9"/>
<dbReference type="EMBL" id="AF028223">
    <property type="protein sequence ID" value="AAC00116.1"/>
    <property type="molecule type" value="Genomic_DNA"/>
</dbReference>
<dbReference type="SMR" id="O47676"/>
<dbReference type="GO" id="GO:0005743">
    <property type="term" value="C:mitochondrial inner membrane"/>
    <property type="evidence" value="ECO:0007669"/>
    <property type="project" value="UniProtKB-SubCell"/>
</dbReference>
<dbReference type="GO" id="GO:0045277">
    <property type="term" value="C:respiratory chain complex IV"/>
    <property type="evidence" value="ECO:0000250"/>
    <property type="project" value="UniProtKB"/>
</dbReference>
<dbReference type="GO" id="GO:0005507">
    <property type="term" value="F:copper ion binding"/>
    <property type="evidence" value="ECO:0007669"/>
    <property type="project" value="InterPro"/>
</dbReference>
<dbReference type="GO" id="GO:0004129">
    <property type="term" value="F:cytochrome-c oxidase activity"/>
    <property type="evidence" value="ECO:0007669"/>
    <property type="project" value="UniProtKB-EC"/>
</dbReference>
<dbReference type="GO" id="GO:0042773">
    <property type="term" value="P:ATP synthesis coupled electron transport"/>
    <property type="evidence" value="ECO:0007669"/>
    <property type="project" value="TreeGrafter"/>
</dbReference>
<dbReference type="CDD" id="cd13912">
    <property type="entry name" value="CcO_II_C"/>
    <property type="match status" value="1"/>
</dbReference>
<dbReference type="FunFam" id="1.10.287.90:FF:000001">
    <property type="entry name" value="Cytochrome c oxidase subunit 2"/>
    <property type="match status" value="1"/>
</dbReference>
<dbReference type="FunFam" id="2.60.40.420:FF:000001">
    <property type="entry name" value="Cytochrome c oxidase subunit 2"/>
    <property type="match status" value="1"/>
</dbReference>
<dbReference type="Gene3D" id="1.10.287.90">
    <property type="match status" value="1"/>
</dbReference>
<dbReference type="Gene3D" id="2.60.40.420">
    <property type="entry name" value="Cupredoxins - blue copper proteins"/>
    <property type="match status" value="1"/>
</dbReference>
<dbReference type="InterPro" id="IPR045187">
    <property type="entry name" value="CcO_II"/>
</dbReference>
<dbReference type="InterPro" id="IPR002429">
    <property type="entry name" value="CcO_II-like_C"/>
</dbReference>
<dbReference type="InterPro" id="IPR034210">
    <property type="entry name" value="CcO_II_C"/>
</dbReference>
<dbReference type="InterPro" id="IPR001505">
    <property type="entry name" value="Copper_CuA"/>
</dbReference>
<dbReference type="InterPro" id="IPR008972">
    <property type="entry name" value="Cupredoxin"/>
</dbReference>
<dbReference type="InterPro" id="IPR014222">
    <property type="entry name" value="Cyt_c_oxidase_su2"/>
</dbReference>
<dbReference type="InterPro" id="IPR011759">
    <property type="entry name" value="Cyt_c_oxidase_su2_TM_dom"/>
</dbReference>
<dbReference type="InterPro" id="IPR036257">
    <property type="entry name" value="Cyt_c_oxidase_su2_TM_sf"/>
</dbReference>
<dbReference type="NCBIfam" id="TIGR02866">
    <property type="entry name" value="CoxB"/>
    <property type="match status" value="1"/>
</dbReference>
<dbReference type="PANTHER" id="PTHR22888:SF9">
    <property type="entry name" value="CYTOCHROME C OXIDASE SUBUNIT 2"/>
    <property type="match status" value="1"/>
</dbReference>
<dbReference type="PANTHER" id="PTHR22888">
    <property type="entry name" value="CYTOCHROME C OXIDASE, SUBUNIT II"/>
    <property type="match status" value="1"/>
</dbReference>
<dbReference type="Pfam" id="PF00116">
    <property type="entry name" value="COX2"/>
    <property type="match status" value="1"/>
</dbReference>
<dbReference type="Pfam" id="PF02790">
    <property type="entry name" value="COX2_TM"/>
    <property type="match status" value="1"/>
</dbReference>
<dbReference type="PRINTS" id="PR01166">
    <property type="entry name" value="CYCOXIDASEII"/>
</dbReference>
<dbReference type="SUPFAM" id="SSF49503">
    <property type="entry name" value="Cupredoxins"/>
    <property type="match status" value="1"/>
</dbReference>
<dbReference type="SUPFAM" id="SSF81464">
    <property type="entry name" value="Cytochrome c oxidase subunit II-like, transmembrane region"/>
    <property type="match status" value="1"/>
</dbReference>
<dbReference type="PROSITE" id="PS00078">
    <property type="entry name" value="COX2"/>
    <property type="match status" value="1"/>
</dbReference>
<dbReference type="PROSITE" id="PS50857">
    <property type="entry name" value="COX2_CUA"/>
    <property type="match status" value="1"/>
</dbReference>
<dbReference type="PROSITE" id="PS50999">
    <property type="entry name" value="COX2_TM"/>
    <property type="match status" value="1"/>
</dbReference>
<reference key="1">
    <citation type="journal article" date="1997" name="Syst. Biol.">
        <title>Molecular systematics of the Canidae.</title>
        <authorList>
            <person name="Wayne R.K."/>
            <person name="Geffen E."/>
            <person name="Girman D.J."/>
            <person name="Koepfli K.-P."/>
            <person name="Lau L.M."/>
            <person name="Marshall C.R."/>
        </authorList>
    </citation>
    <scope>NUCLEOTIDE SEQUENCE [GENOMIC DNA]</scope>
</reference>
<feature type="chain" id="PRO_0000183672" description="Cytochrome c oxidase subunit 2">
    <location>
        <begin position="1"/>
        <end position="227"/>
    </location>
</feature>
<feature type="topological domain" description="Mitochondrial intermembrane" evidence="4">
    <location>
        <begin position="1"/>
        <end position="14"/>
    </location>
</feature>
<feature type="transmembrane region" description="Helical; Name=I" evidence="4">
    <location>
        <begin position="15"/>
        <end position="45"/>
    </location>
</feature>
<feature type="topological domain" description="Mitochondrial matrix" evidence="4">
    <location>
        <begin position="46"/>
        <end position="59"/>
    </location>
</feature>
<feature type="transmembrane region" description="Helical; Name=II" evidence="4">
    <location>
        <begin position="60"/>
        <end position="87"/>
    </location>
</feature>
<feature type="topological domain" description="Mitochondrial intermembrane" evidence="4">
    <location>
        <begin position="88"/>
        <end position="227"/>
    </location>
</feature>
<feature type="binding site" evidence="4">
    <location>
        <position position="161"/>
    </location>
    <ligand>
        <name>Cu cation</name>
        <dbReference type="ChEBI" id="CHEBI:23378"/>
        <label>A1</label>
    </ligand>
</feature>
<feature type="binding site" evidence="4">
    <location>
        <position position="196"/>
    </location>
    <ligand>
        <name>Cu cation</name>
        <dbReference type="ChEBI" id="CHEBI:23378"/>
        <label>A1</label>
    </ligand>
</feature>
<feature type="binding site" evidence="4">
    <location>
        <position position="196"/>
    </location>
    <ligand>
        <name>Cu cation</name>
        <dbReference type="ChEBI" id="CHEBI:23378"/>
        <label>A2</label>
    </ligand>
</feature>
<feature type="binding site" evidence="4">
    <location>
        <position position="198"/>
    </location>
    <ligand>
        <name>Cu cation</name>
        <dbReference type="ChEBI" id="CHEBI:23378"/>
        <label>A2</label>
    </ligand>
</feature>
<feature type="binding site" evidence="4">
    <location>
        <position position="198"/>
    </location>
    <ligand>
        <name>Mg(2+)</name>
        <dbReference type="ChEBI" id="CHEBI:18420"/>
        <note>ligand shared with MT-CO1</note>
    </ligand>
</feature>
<feature type="binding site" evidence="4">
    <location>
        <position position="200"/>
    </location>
    <ligand>
        <name>Cu cation</name>
        <dbReference type="ChEBI" id="CHEBI:23378"/>
        <label>A1</label>
    </ligand>
</feature>
<feature type="binding site" evidence="4">
    <location>
        <position position="200"/>
    </location>
    <ligand>
        <name>Cu cation</name>
        <dbReference type="ChEBI" id="CHEBI:23378"/>
        <label>A2</label>
    </ligand>
</feature>
<feature type="binding site" evidence="4">
    <location>
        <position position="204"/>
    </location>
    <ligand>
        <name>Cu cation</name>
        <dbReference type="ChEBI" id="CHEBI:23378"/>
        <label>A2</label>
    </ligand>
</feature>
<feature type="binding site" evidence="4">
    <location>
        <position position="207"/>
    </location>
    <ligand>
        <name>Cu cation</name>
        <dbReference type="ChEBI" id="CHEBI:23378"/>
        <label>A1</label>
    </ligand>
</feature>
<feature type="modified residue" description="Phosphotyrosine" evidence="2">
    <location>
        <position position="218"/>
    </location>
</feature>
<keyword id="KW-0186">Copper</keyword>
<keyword id="KW-0249">Electron transport</keyword>
<keyword id="KW-0460">Magnesium</keyword>
<keyword id="KW-0472">Membrane</keyword>
<keyword id="KW-0479">Metal-binding</keyword>
<keyword id="KW-0496">Mitochondrion</keyword>
<keyword id="KW-0999">Mitochondrion inner membrane</keyword>
<keyword id="KW-0597">Phosphoprotein</keyword>
<keyword id="KW-0679">Respiratory chain</keyword>
<keyword id="KW-1278">Translocase</keyword>
<keyword id="KW-0812">Transmembrane</keyword>
<keyword id="KW-1133">Transmembrane helix</keyword>
<keyword id="KW-0813">Transport</keyword>
<accession>O47676</accession>
<geneLocation type="mitochondrion"/>
<organism>
    <name type="scientific">Lycalopex culpaeus</name>
    <name type="common">Culpeo fox</name>
    <name type="synonym">Pseudalopex culpaeus</name>
    <dbReference type="NCBI Taxonomy" id="68736"/>
    <lineage>
        <taxon>Eukaryota</taxon>
        <taxon>Metazoa</taxon>
        <taxon>Chordata</taxon>
        <taxon>Craniata</taxon>
        <taxon>Vertebrata</taxon>
        <taxon>Euteleostomi</taxon>
        <taxon>Mammalia</taxon>
        <taxon>Eutheria</taxon>
        <taxon>Laurasiatheria</taxon>
        <taxon>Carnivora</taxon>
        <taxon>Caniformia</taxon>
        <taxon>Canidae</taxon>
        <taxon>Lycalopex</taxon>
    </lineage>
</organism>
<proteinExistence type="inferred from homology"/>
<evidence type="ECO:0000250" key="1">
    <source>
        <dbReference type="UniProtKB" id="P00403"/>
    </source>
</evidence>
<evidence type="ECO:0000250" key="2">
    <source>
        <dbReference type="UniProtKB" id="P00406"/>
    </source>
</evidence>
<evidence type="ECO:0000250" key="3">
    <source>
        <dbReference type="UniProtKB" id="P00410"/>
    </source>
</evidence>
<evidence type="ECO:0000250" key="4">
    <source>
        <dbReference type="UniProtKB" id="P68530"/>
    </source>
</evidence>
<evidence type="ECO:0000305" key="5"/>
<gene>
    <name type="primary">MT-CO2</name>
    <name type="synonym">COII</name>
    <name type="synonym">COX2</name>
    <name type="synonym">COXII</name>
    <name type="synonym">MTCO2</name>
</gene>
<sequence length="227" mass="26050">MAYPFQLGLQDATSPIMEELLHFHDHTLMIVFLISSLVLYIISLMLTTKLTHTSTMDAQEVETVWTILPAIILILIALPSLRILYMMDEINNPSLTVKTMGHQWYWSYEYTDYEDLNFDSYMIPTQELKLGELRLLEVDNRVVLPMEMTVRMLISSEDVLHSWAVPSLGLKTDAIPGRLNQTTLMAMRPGLYYGQCSEICGSNHSFMPIVLEMVPLSYFETWSAVMV</sequence>
<name>COX2_LYCCU</name>
<protein>
    <recommendedName>
        <fullName>Cytochrome c oxidase subunit 2</fullName>
        <ecNumber>7.1.1.9</ecNumber>
    </recommendedName>
    <alternativeName>
        <fullName>Cytochrome c oxidase polypeptide II</fullName>
    </alternativeName>
</protein>